<name>APDE_EMENI</name>
<reference key="1">
    <citation type="journal article" date="2005" name="Nature">
        <title>Sequencing of Aspergillus nidulans and comparative analysis with A. fumigatus and A. oryzae.</title>
        <authorList>
            <person name="Galagan J.E."/>
            <person name="Calvo S.E."/>
            <person name="Cuomo C."/>
            <person name="Ma L.-J."/>
            <person name="Wortman J.R."/>
            <person name="Batzoglou S."/>
            <person name="Lee S.-I."/>
            <person name="Bastuerkmen M."/>
            <person name="Spevak C.C."/>
            <person name="Clutterbuck J."/>
            <person name="Kapitonov V."/>
            <person name="Jurka J."/>
            <person name="Scazzocchio C."/>
            <person name="Farman M.L."/>
            <person name="Butler J."/>
            <person name="Purcell S."/>
            <person name="Harris S."/>
            <person name="Braus G.H."/>
            <person name="Draht O."/>
            <person name="Busch S."/>
            <person name="D'Enfert C."/>
            <person name="Bouchier C."/>
            <person name="Goldman G.H."/>
            <person name="Bell-Pedersen D."/>
            <person name="Griffiths-Jones S."/>
            <person name="Doonan J.H."/>
            <person name="Yu J."/>
            <person name="Vienken K."/>
            <person name="Pain A."/>
            <person name="Freitag M."/>
            <person name="Selker E.U."/>
            <person name="Archer D.B."/>
            <person name="Penalva M.A."/>
            <person name="Oakley B.R."/>
            <person name="Momany M."/>
            <person name="Tanaka T."/>
            <person name="Kumagai T."/>
            <person name="Asai K."/>
            <person name="Machida M."/>
            <person name="Nierman W.C."/>
            <person name="Denning D.W."/>
            <person name="Caddick M.X."/>
            <person name="Hynes M."/>
            <person name="Paoletti M."/>
            <person name="Fischer R."/>
            <person name="Miller B.L."/>
            <person name="Dyer P.S."/>
            <person name="Sachs M.S."/>
            <person name="Osmani S.A."/>
            <person name="Birren B.W."/>
        </authorList>
    </citation>
    <scope>NUCLEOTIDE SEQUENCE [LARGE SCALE GENOMIC DNA]</scope>
    <source>
        <strain>FGSC A4 / ATCC 38163 / CBS 112.46 / NRRL 194 / M139</strain>
    </source>
</reference>
<reference key="2">
    <citation type="journal article" date="2009" name="Fungal Genet. Biol.">
        <title>The 2008 update of the Aspergillus nidulans genome annotation: a community effort.</title>
        <authorList>
            <person name="Wortman J.R."/>
            <person name="Gilsenan J.M."/>
            <person name="Joardar V."/>
            <person name="Deegan J."/>
            <person name="Clutterbuck J."/>
            <person name="Andersen M.R."/>
            <person name="Archer D."/>
            <person name="Bencina M."/>
            <person name="Braus G."/>
            <person name="Coutinho P."/>
            <person name="von Dohren H."/>
            <person name="Doonan J."/>
            <person name="Driessen A.J."/>
            <person name="Durek P."/>
            <person name="Espeso E."/>
            <person name="Fekete E."/>
            <person name="Flipphi M."/>
            <person name="Estrada C.G."/>
            <person name="Geysens S."/>
            <person name="Goldman G."/>
            <person name="de Groot P.W."/>
            <person name="Hansen K."/>
            <person name="Harris S.D."/>
            <person name="Heinekamp T."/>
            <person name="Helmstaedt K."/>
            <person name="Henrissat B."/>
            <person name="Hofmann G."/>
            <person name="Homan T."/>
            <person name="Horio T."/>
            <person name="Horiuchi H."/>
            <person name="James S."/>
            <person name="Jones M."/>
            <person name="Karaffa L."/>
            <person name="Karanyi Z."/>
            <person name="Kato M."/>
            <person name="Keller N."/>
            <person name="Kelly D.E."/>
            <person name="Kiel J.A."/>
            <person name="Kim J.M."/>
            <person name="van der Klei I.J."/>
            <person name="Klis F.M."/>
            <person name="Kovalchuk A."/>
            <person name="Krasevec N."/>
            <person name="Kubicek C.P."/>
            <person name="Liu B."/>
            <person name="Maccabe A."/>
            <person name="Meyer V."/>
            <person name="Mirabito P."/>
            <person name="Miskei M."/>
            <person name="Mos M."/>
            <person name="Mullins J."/>
            <person name="Nelson D.R."/>
            <person name="Nielsen J."/>
            <person name="Oakley B.R."/>
            <person name="Osmani S.A."/>
            <person name="Pakula T."/>
            <person name="Paszewski A."/>
            <person name="Paulsen I."/>
            <person name="Pilsyk S."/>
            <person name="Pocsi I."/>
            <person name="Punt P.J."/>
            <person name="Ram A.F."/>
            <person name="Ren Q."/>
            <person name="Robellet X."/>
            <person name="Robson G."/>
            <person name="Seiboth B."/>
            <person name="van Solingen P."/>
            <person name="Specht T."/>
            <person name="Sun J."/>
            <person name="Taheri-Talesh N."/>
            <person name="Takeshita N."/>
            <person name="Ussery D."/>
            <person name="vanKuyk P.A."/>
            <person name="Visser H."/>
            <person name="van de Vondervoort P.J."/>
            <person name="de Vries R.P."/>
            <person name="Walton J."/>
            <person name="Xiang X."/>
            <person name="Xiong Y."/>
            <person name="Zeng A.P."/>
            <person name="Brandt B.W."/>
            <person name="Cornell M.J."/>
            <person name="van den Hondel C.A."/>
            <person name="Visser J."/>
            <person name="Oliver S.G."/>
            <person name="Turner G."/>
        </authorList>
    </citation>
    <scope>GENOME REANNOTATION</scope>
    <source>
        <strain>FGSC A4 / ATCC 38163 / CBS 112.46 / NRRL 194 / M139</strain>
    </source>
</reference>
<reference key="3">
    <citation type="journal article" date="2007" name="Nat. Chem. Biol.">
        <title>Genomics-driven discovery of PKS-NRPS hybrid metabolites from Aspergillus nidulans.</title>
        <authorList>
            <person name="Bergmann S."/>
            <person name="Schuemann J."/>
            <person name="Scherlach K."/>
            <person name="Lange C."/>
            <person name="Brakhage A.A."/>
            <person name="Hertweck C."/>
        </authorList>
    </citation>
    <scope>FUNCTION</scope>
    <scope>INDUCTION</scope>
    <scope>PATHWAY</scope>
</reference>
<reference key="4">
    <citation type="journal article" date="2010" name="J. Am. Chem. Soc.">
        <title>Analysis of intact and dissected fungal polyketide synthase-nonribosomal peptide synthetase in vitro and in Saccharomyces cerevisiae.</title>
        <authorList>
            <person name="Xu W."/>
            <person name="Cai X."/>
            <person name="Jung M.E."/>
            <person name="Tang Y."/>
        </authorList>
    </citation>
    <scope>FUNCTION</scope>
    <scope>CATALYTIC ACTIVITY</scope>
    <scope>PATHWAY</scope>
</reference>
<reference key="5">
    <citation type="journal article" date="2013" name="Chem. Sci.">
        <title>One pathway, many compounds: Heterologous expression of a fungal biosynthetic pathway reveals its intrinsic potential for diversity.</title>
        <authorList>
            <person name="Wasil Z."/>
            <person name="Pahirulzaman K.A.K."/>
            <person name="Butts C."/>
            <person name="Simpson T.J."/>
            <person name="Lazarus C.M."/>
            <person name="Cox R.J."/>
        </authorList>
    </citation>
    <scope>FUNCTION</scope>
    <scope>CATALYTIC ACTIVITY</scope>
    <scope>PATHWAY</scope>
</reference>
<reference key="6">
    <citation type="journal article" date="2014" name="Org. Lett.">
        <title>Methylation-dependent acyl transfer between polyketide synthase and nonribosomal peptide synthetase modules in fungal natural product biosynthesis.</title>
        <authorList>
            <person name="Zou Y."/>
            <person name="Xu W."/>
            <person name="Tsunematsu Y."/>
            <person name="Tang M."/>
            <person name="Watanabe K."/>
            <person name="Tang Y."/>
        </authorList>
    </citation>
    <scope>FUNCTION</scope>
</reference>
<feature type="chain" id="PRO_0000438448" description="Cytochrome P450 monooxygenase apdE">
    <location>
        <begin position="1"/>
        <end position="519"/>
    </location>
</feature>
<feature type="transmembrane region" description="Helical" evidence="2">
    <location>
        <begin position="27"/>
        <end position="47"/>
    </location>
</feature>
<feature type="binding site" description="axial binding residue" evidence="1">
    <location>
        <position position="466"/>
    </location>
    <ligand>
        <name>heme</name>
        <dbReference type="ChEBI" id="CHEBI:30413"/>
    </ligand>
    <ligandPart>
        <name>Fe</name>
        <dbReference type="ChEBI" id="CHEBI:18248"/>
    </ligandPart>
</feature>
<feature type="glycosylation site" description="N-linked (GlcNAc...) asparagine" evidence="3">
    <location>
        <position position="327"/>
    </location>
</feature>
<feature type="glycosylation site" description="N-linked (GlcNAc...) asparagine" evidence="3">
    <location>
        <position position="379"/>
    </location>
</feature>
<feature type="glycosylation site" description="N-linked (GlcNAc...) asparagine" evidence="3">
    <location>
        <position position="508"/>
    </location>
</feature>
<accession>Q5ATG9</accession>
<accession>C8VEB2</accession>
<protein>
    <recommendedName>
        <fullName evidence="8">Cytochrome P450 monooxygenase apdE</fullName>
        <ecNumber evidence="7">1.-.-.-</ecNumber>
    </recommendedName>
    <alternativeName>
        <fullName evidence="8">Aspyridones biosynthesis protein E</fullName>
    </alternativeName>
</protein>
<evidence type="ECO:0000250" key="1">
    <source>
        <dbReference type="UniProtKB" id="P04798"/>
    </source>
</evidence>
<evidence type="ECO:0000255" key="2"/>
<evidence type="ECO:0000255" key="3">
    <source>
        <dbReference type="PROSITE-ProRule" id="PRU00498"/>
    </source>
</evidence>
<evidence type="ECO:0000269" key="4">
    <source>
    </source>
</evidence>
<evidence type="ECO:0000269" key="5">
    <source>
    </source>
</evidence>
<evidence type="ECO:0000269" key="6">
    <source>
    </source>
</evidence>
<evidence type="ECO:0000269" key="7">
    <source ref="5"/>
</evidence>
<evidence type="ECO:0000303" key="8">
    <source>
    </source>
</evidence>
<evidence type="ECO:0000305" key="9"/>
<evidence type="ECO:0000305" key="10">
    <source ref="5"/>
</evidence>
<keyword id="KW-0325">Glycoprotein</keyword>
<keyword id="KW-0349">Heme</keyword>
<keyword id="KW-0408">Iron</keyword>
<keyword id="KW-0472">Membrane</keyword>
<keyword id="KW-0479">Metal-binding</keyword>
<keyword id="KW-0503">Monooxygenase</keyword>
<keyword id="KW-0560">Oxidoreductase</keyword>
<keyword id="KW-1185">Reference proteome</keyword>
<keyword id="KW-0812">Transmembrane</keyword>
<keyword id="KW-1133">Transmembrane helix</keyword>
<comment type="function">
    <text evidence="4 5 6 7 10">Cytochrome P450 monooxygenase; part of the gene cluster that mediates the biosynthesis of aspyridones (PubMed:17369821, Ref.5). The polyketide-amino acid backbone preaspyridone A is first assembled by the PKS-NRPS hybrid apdA (PubMed:17369821, PubMed:20828130). The assembly of preaspyridone A is initiated by loading of malonyl-CoA onto apdA, followed by decarboxylation to yield the acetyl starter unit (PubMed:20828130). The growing polyketide chain then elongates into a tetraketide (PubMed:20828130). The adpA PKS module catalyzes three Claisen condensations, as well as beta-keto processing and methylation (PubMed:17369821, PubMed:20828130). Alpha-methylation step during polyketide synthesis is a prerequisite and a key checkpoint for chain transfer between PKS and NRPS modules (PubMed:25494235). The downstream NRPS module contains the condensation (C), adenylation (A), and thiolation (T) domains and catalyzes the incorporation of tyrosine via the formation of the L-tyrosinyl-thioester and the amide linkage between L-tyrosinyl-thioester and the tetraketide (PubMed:20828130). The bimodular assembly line is terminated with a reductase (R) domain that facilitates formation and release of the tetramic acid product (PubMed:20828130). Because apdA lacks a designated enoylreductase (ER) domain, the required activity is provided the enoyl reductase apdC (PubMed:17369821, PubMed:20828130, Ref.5). ApdC appears to operate with different stereoselectivity in different PKS cycle (Ref.5). Combined with apdC, apdA is proposed to synthesize preaspyridone A via about 20 enzymatic steps (PubMed:20828130). A number of oxidative steps performed successively by the cytochrome P450 monooxygenases apdE and apdB are required for the conversion of preaspyridone A to aspyridone A (PubMed:17369821). The cytochrome P450 monooxygenase apdE is responsible for the oxidative dephenylation of preaspyridone A (Ref.5). Finally, the predicted FAD-dependent monooxygenase apdD and the acyl-CoA dehydrogenase apdG may be involved in the transformation of aspyridone A into aspyridone B (Probable) (PubMed:17369821).</text>
</comment>
<comment type="cofactor">
    <cofactor evidence="1">
        <name>heme</name>
        <dbReference type="ChEBI" id="CHEBI:30413"/>
    </cofactor>
</comment>
<comment type="pathway">
    <text evidence="4 7">Secondary metabolite biosynthesis.</text>
</comment>
<comment type="subcellular location">
    <subcellularLocation>
        <location evidence="2">Membrane</location>
        <topology evidence="2">Single-pass membrane protein</topology>
    </subcellularLocation>
</comment>
<comment type="induction">
    <text evidence="4">Expression is positively regulated by the aspyridones cluster specific transcription regulator apdR (PubMed:17369821).</text>
</comment>
<comment type="similarity">
    <text evidence="9">Belongs to the cytochrome P450 family.</text>
</comment>
<organism>
    <name type="scientific">Emericella nidulans (strain FGSC A4 / ATCC 38163 / CBS 112.46 / NRRL 194 / M139)</name>
    <name type="common">Aspergillus nidulans</name>
    <dbReference type="NCBI Taxonomy" id="227321"/>
    <lineage>
        <taxon>Eukaryota</taxon>
        <taxon>Fungi</taxon>
        <taxon>Dikarya</taxon>
        <taxon>Ascomycota</taxon>
        <taxon>Pezizomycotina</taxon>
        <taxon>Eurotiomycetes</taxon>
        <taxon>Eurotiomycetidae</taxon>
        <taxon>Eurotiales</taxon>
        <taxon>Aspergillaceae</taxon>
        <taxon>Aspergillus</taxon>
        <taxon>Aspergillus subgen. Nidulantes</taxon>
    </lineage>
</organism>
<proteinExistence type="evidence at protein level"/>
<sequence length="519" mass="60440">MSLASTLPRASFETLLQHTNFMDGIKFVFFAFVVYSCFTIAVGWVVYEWKRKAHGCGKIPRYPHRDPFFGFDIVFGMAKSLRNDYFLVWLNKVHENLPKTFLVNFVGTRFIYTIEPENMKSMSAINWQDFAVGPMRRNNKATAPFADKGVNTVDGHEWEFSRFLIKPFFKRETFTDTSRLTLHVDRVLEQLPADGETVNIQPLIQRWFLDVTTASLFGESIESLVYPERAPICWAMVDVLRGLRLRLQWYKYLWLFRHQAWLDAVEVVHRYLNAHIDRTYKELDEYKRQGKNPEAADRNDLLWYMASNLQDKEALRSQICLIFVPNNDTTSIFISHILWNLARHPGIYEKCRQEVLALGDAELSFSVLRNMKYLNAVLNETHRLFPNGVTQVRKCIRDTTLPVGGGPDGKQPIFVRKGDVVQVNKNVIHRDHDIWGPDAEDFRPERWENLRPYWNFVPFGGGPRRCPAQMLVTAEASYFLARLMRVYKRIEARDPNPYVGVMRVGPSNKTGVHIALFKE</sequence>
<gene>
    <name evidence="8" type="primary">apdE</name>
    <name type="ORF">AN8411</name>
</gene>
<dbReference type="EC" id="1.-.-.-" evidence="7"/>
<dbReference type="EMBL" id="BN001305">
    <property type="protein sequence ID" value="CBF80485.1"/>
    <property type="molecule type" value="Genomic_DNA"/>
</dbReference>
<dbReference type="EMBL" id="AACD01000153">
    <property type="protein sequence ID" value="EAA67033.1"/>
    <property type="molecule type" value="Genomic_DNA"/>
</dbReference>
<dbReference type="RefSeq" id="XP_681680.1">
    <property type="nucleotide sequence ID" value="XM_676588.1"/>
</dbReference>
<dbReference type="SMR" id="Q5ATG9"/>
<dbReference type="STRING" id="227321.Q5ATG9"/>
<dbReference type="GlyCosmos" id="Q5ATG9">
    <property type="glycosylation" value="3 sites, No reported glycans"/>
</dbReference>
<dbReference type="EnsemblFungi" id="CBF80485">
    <property type="protein sequence ID" value="CBF80485"/>
    <property type="gene ID" value="ANIA_08411"/>
</dbReference>
<dbReference type="KEGG" id="ani:ANIA_08411"/>
<dbReference type="VEuPathDB" id="FungiDB:AN8411"/>
<dbReference type="eggNOG" id="KOG0158">
    <property type="taxonomic scope" value="Eukaryota"/>
</dbReference>
<dbReference type="HOGENOM" id="CLU_001570_27_0_1"/>
<dbReference type="InParanoid" id="Q5ATG9"/>
<dbReference type="OMA" id="TDLLWSM"/>
<dbReference type="OrthoDB" id="1470350at2759"/>
<dbReference type="Proteomes" id="UP000000560">
    <property type="component" value="Chromosome V"/>
</dbReference>
<dbReference type="GO" id="GO:0016020">
    <property type="term" value="C:membrane"/>
    <property type="evidence" value="ECO:0007669"/>
    <property type="project" value="UniProtKB-SubCell"/>
</dbReference>
<dbReference type="GO" id="GO:0020037">
    <property type="term" value="F:heme binding"/>
    <property type="evidence" value="ECO:0007669"/>
    <property type="project" value="InterPro"/>
</dbReference>
<dbReference type="GO" id="GO:0005506">
    <property type="term" value="F:iron ion binding"/>
    <property type="evidence" value="ECO:0007669"/>
    <property type="project" value="InterPro"/>
</dbReference>
<dbReference type="GO" id="GO:0004497">
    <property type="term" value="F:monooxygenase activity"/>
    <property type="evidence" value="ECO:0000318"/>
    <property type="project" value="GO_Central"/>
</dbReference>
<dbReference type="GO" id="GO:0016712">
    <property type="term" value="F:oxidoreductase activity, acting on paired donors, with incorporation or reduction of molecular oxygen, reduced flavin or flavoprotein as one donor, and incorporation of one atom of oxygen"/>
    <property type="evidence" value="ECO:0007669"/>
    <property type="project" value="InterPro"/>
</dbReference>
<dbReference type="CDD" id="cd11063">
    <property type="entry name" value="CYP52"/>
    <property type="match status" value="1"/>
</dbReference>
<dbReference type="Gene3D" id="1.10.630.10">
    <property type="entry name" value="Cytochrome P450"/>
    <property type="match status" value="1"/>
</dbReference>
<dbReference type="InterPro" id="IPR001128">
    <property type="entry name" value="Cyt_P450"/>
</dbReference>
<dbReference type="InterPro" id="IPR017972">
    <property type="entry name" value="Cyt_P450_CS"/>
</dbReference>
<dbReference type="InterPro" id="IPR002974">
    <property type="entry name" value="Cyt_P450_E_CYP52_ascomycetes"/>
</dbReference>
<dbReference type="InterPro" id="IPR047146">
    <property type="entry name" value="Cyt_P450_E_CYP52_fungi"/>
</dbReference>
<dbReference type="InterPro" id="IPR036396">
    <property type="entry name" value="Cyt_P450_sf"/>
</dbReference>
<dbReference type="PANTHER" id="PTHR24287:SF18">
    <property type="entry name" value="CYTOCHROME P450 MONOOXYGENASE APDE-RELATED"/>
    <property type="match status" value="1"/>
</dbReference>
<dbReference type="PANTHER" id="PTHR24287">
    <property type="entry name" value="P450, PUTATIVE (EUROFUNG)-RELATED"/>
    <property type="match status" value="1"/>
</dbReference>
<dbReference type="Pfam" id="PF00067">
    <property type="entry name" value="p450"/>
    <property type="match status" value="1"/>
</dbReference>
<dbReference type="PRINTS" id="PR01239">
    <property type="entry name" value="EP450IICYP52"/>
</dbReference>
<dbReference type="SUPFAM" id="SSF48264">
    <property type="entry name" value="Cytochrome P450"/>
    <property type="match status" value="1"/>
</dbReference>
<dbReference type="PROSITE" id="PS00086">
    <property type="entry name" value="CYTOCHROME_P450"/>
    <property type="match status" value="1"/>
</dbReference>